<feature type="chain" id="PRO_0000181989" description="Receptor-transporting protein 1">
    <location>
        <begin position="1"/>
        <end position="263"/>
    </location>
</feature>
<feature type="topological domain" description="Cytoplasmic" evidence="2">
    <location>
        <begin position="1"/>
        <end position="238"/>
    </location>
</feature>
<feature type="transmembrane region" description="Helical" evidence="2">
    <location>
        <begin position="239"/>
        <end position="259"/>
    </location>
</feature>
<feature type="topological domain" description="Extracellular" evidence="2">
    <location>
        <begin position="260"/>
        <end position="263"/>
    </location>
</feature>
<feature type="zinc finger region" description="3CxxC-type" evidence="2">
    <location>
        <begin position="88"/>
        <end position="197"/>
    </location>
</feature>
<dbReference type="EMBL" id="AB070181">
    <property type="protein sequence ID" value="BAB63126.1"/>
    <property type="molecule type" value="mRNA"/>
</dbReference>
<dbReference type="RefSeq" id="NP_001270896.1">
    <property type="nucleotide sequence ID" value="NM_001283967.1"/>
</dbReference>
<dbReference type="STRING" id="9541.ENSMFAP00000012143"/>
<dbReference type="eggNOG" id="ENOG502S1UZ">
    <property type="taxonomic scope" value="Eukaryota"/>
</dbReference>
<dbReference type="Proteomes" id="UP000233100">
    <property type="component" value="Unplaced"/>
</dbReference>
<dbReference type="GO" id="GO:0009986">
    <property type="term" value="C:cell surface"/>
    <property type="evidence" value="ECO:0007669"/>
    <property type="project" value="TreeGrafter"/>
</dbReference>
<dbReference type="GO" id="GO:0005886">
    <property type="term" value="C:plasma membrane"/>
    <property type="evidence" value="ECO:0007669"/>
    <property type="project" value="UniProtKB-SubCell"/>
</dbReference>
<dbReference type="GO" id="GO:0031849">
    <property type="term" value="F:olfactory receptor binding"/>
    <property type="evidence" value="ECO:0007669"/>
    <property type="project" value="TreeGrafter"/>
</dbReference>
<dbReference type="GO" id="GO:0008270">
    <property type="term" value="F:zinc ion binding"/>
    <property type="evidence" value="ECO:0007669"/>
    <property type="project" value="UniProtKB-KW"/>
</dbReference>
<dbReference type="GO" id="GO:0001580">
    <property type="term" value="P:detection of chemical stimulus involved in sensory perception of bitter taste"/>
    <property type="evidence" value="ECO:0007669"/>
    <property type="project" value="TreeGrafter"/>
</dbReference>
<dbReference type="GO" id="GO:0051205">
    <property type="term" value="P:protein insertion into membrane"/>
    <property type="evidence" value="ECO:0007669"/>
    <property type="project" value="TreeGrafter"/>
</dbReference>
<dbReference type="GO" id="GO:0006612">
    <property type="term" value="P:protein targeting to membrane"/>
    <property type="evidence" value="ECO:0007669"/>
    <property type="project" value="TreeGrafter"/>
</dbReference>
<dbReference type="InterPro" id="IPR026096">
    <property type="entry name" value="R-trans_p"/>
</dbReference>
<dbReference type="InterPro" id="IPR027377">
    <property type="entry name" value="ZAR1/RTP1-5-like_Znf-3CxxC"/>
</dbReference>
<dbReference type="PANTHER" id="PTHR14402">
    <property type="entry name" value="RECEPTOR TRANSPORTING PROTEIN"/>
    <property type="match status" value="1"/>
</dbReference>
<dbReference type="PANTHER" id="PTHR14402:SF19">
    <property type="entry name" value="RECEPTOR-TRANSPORTING PROTEIN 1"/>
    <property type="match status" value="1"/>
</dbReference>
<dbReference type="Pfam" id="PF13695">
    <property type="entry name" value="Zn_ribbon_3CxxC"/>
    <property type="match status" value="1"/>
</dbReference>
<dbReference type="SMART" id="SM01328">
    <property type="entry name" value="zf-3CxxC"/>
    <property type="match status" value="1"/>
</dbReference>
<accession>Q95JK0</accession>
<evidence type="ECO:0000250" key="1"/>
<evidence type="ECO:0000255" key="2"/>
<evidence type="ECO:0000305" key="3"/>
<name>RTP1_MACFA</name>
<proteinExistence type="evidence at transcript level"/>
<comment type="function">
    <text evidence="1">Specifically promotes functional cell surface expression of olfactory receptors, but not of other GPCRs.</text>
</comment>
<comment type="subunit">
    <text evidence="1">Interacts with olfactory receptors.</text>
</comment>
<comment type="subcellular location">
    <subcellularLocation>
        <location evidence="1">Cell membrane</location>
        <topology evidence="1">Single-pass type III membrane protein</topology>
    </subcellularLocation>
    <text evidence="1">Effective cell surface expression depends upon interaction with olfactory receptors.</text>
</comment>
<comment type="similarity">
    <text evidence="3">Belongs to the TMEM7 family.</text>
</comment>
<protein>
    <recommendedName>
        <fullName>Receptor-transporting protein 1</fullName>
    </recommendedName>
</protein>
<reference key="1">
    <citation type="journal article" date="2002" name="BMC Genomics">
        <title>Cynomolgus monkey testicular cDNAs for discovery of novel human genes in the human genome sequence.</title>
        <authorList>
            <person name="Osada N."/>
            <person name="Hida M."/>
            <person name="Kusuda J."/>
            <person name="Tanuma R."/>
            <person name="Hirata M."/>
            <person name="Suto Y."/>
            <person name="Hirai M."/>
            <person name="Terao K."/>
            <person name="Sugano S."/>
            <person name="Hashimoto K."/>
        </authorList>
    </citation>
    <scope>NUCLEOTIDE SEQUENCE [LARGE SCALE MRNA]</scope>
    <source>
        <tissue>Testis</tissue>
    </source>
</reference>
<organism>
    <name type="scientific">Macaca fascicularis</name>
    <name type="common">Crab-eating macaque</name>
    <name type="synonym">Cynomolgus monkey</name>
    <dbReference type="NCBI Taxonomy" id="9541"/>
    <lineage>
        <taxon>Eukaryota</taxon>
        <taxon>Metazoa</taxon>
        <taxon>Chordata</taxon>
        <taxon>Craniata</taxon>
        <taxon>Vertebrata</taxon>
        <taxon>Euteleostomi</taxon>
        <taxon>Mammalia</taxon>
        <taxon>Eutheria</taxon>
        <taxon>Euarchontoglires</taxon>
        <taxon>Primates</taxon>
        <taxon>Haplorrhini</taxon>
        <taxon>Catarrhini</taxon>
        <taxon>Cercopithecidae</taxon>
        <taxon>Cercopithecinae</taxon>
        <taxon>Macaca</taxon>
    </lineage>
</organism>
<sequence length="263" mass="30859">MRIFRPWRLRCPALHLPSLSVFPLRWKLPSLTTDKTMCKSVTTDEWKKVFYEKMEEAKPADSWDLIIDPNLKHNVLSPGWKQYVELHASGRFHCSWCWHTWQSPHLVILFHMFLDRAQRAGSVRMRVFKQLCYECGSARLDESSMLEENIEGLVDNLITSLREQCYGERGGQYRIHVASRQDNRRHRGEFCEACQEGIVHWKPSEKLLEEEATTYTFSRAPSPTKPQDETGSGWNFCSIPWCLFWATVLLLIIYLQLSFRSSV</sequence>
<keyword id="KW-1003">Cell membrane</keyword>
<keyword id="KW-0472">Membrane</keyword>
<keyword id="KW-0479">Metal-binding</keyword>
<keyword id="KW-1185">Reference proteome</keyword>
<keyword id="KW-0812">Transmembrane</keyword>
<keyword id="KW-1133">Transmembrane helix</keyword>
<keyword id="KW-0862">Zinc</keyword>
<keyword id="KW-0863">Zinc-finger</keyword>
<gene>
    <name type="primary">RTP1</name>
    <name type="ORF">QtsA-16602</name>
</gene>